<accession>P45570</accession>
<accession>Q2MBQ2</accession>
<feature type="chain" id="PRO_0000168648" description="Inner membrane protein YbcI">
    <location>
        <begin position="1"/>
        <end position="173"/>
    </location>
</feature>
<feature type="topological domain" description="Cytoplasmic" evidence="1">
    <location>
        <begin position="1"/>
        <end position="12"/>
    </location>
</feature>
<feature type="transmembrane region" description="Helical" evidence="1">
    <location>
        <begin position="13"/>
        <end position="35"/>
    </location>
</feature>
<feature type="topological domain" description="Periplasmic" evidence="1">
    <location>
        <begin position="36"/>
        <end position="54"/>
    </location>
</feature>
<feature type="transmembrane region" description="Helical" evidence="1">
    <location>
        <begin position="55"/>
        <end position="77"/>
    </location>
</feature>
<feature type="topological domain" description="Cytoplasmic" evidence="1">
    <location>
        <begin position="78"/>
        <end position="83"/>
    </location>
</feature>
<feature type="transmembrane region" description="Helical" evidence="1">
    <location>
        <begin position="84"/>
        <end position="103"/>
    </location>
</feature>
<feature type="topological domain" description="Periplasmic" evidence="1">
    <location>
        <begin position="104"/>
        <end position="147"/>
    </location>
</feature>
<feature type="transmembrane region" description="Helical" evidence="1">
    <location>
        <begin position="148"/>
        <end position="170"/>
    </location>
</feature>
<feature type="topological domain" description="Cytoplasmic" evidence="1">
    <location>
        <begin position="171"/>
        <end position="173"/>
    </location>
</feature>
<sequence length="173" mass="19530">MPTVITHAAVPLCIGLGLGSKVIPPRLLFAGIILAMLPDADVLSFKFGVAYGNVFGHRGFTHSLVFAFVVPLLCVFIGRRWFRAGLIRCWLFLTVSLLSHSLLDSVTTGGKGVGWLWPWSDERFFAPWQVIKVAPFALSRYTTPYGHQVIISELMWVWLPGMLLMGMLWWRRR</sequence>
<gene>
    <name type="primary">ybcI</name>
    <name type="ordered locus">b0527</name>
    <name type="ordered locus">JW0516</name>
</gene>
<evidence type="ECO:0000255" key="1"/>
<proteinExistence type="evidence at protein level"/>
<protein>
    <recommendedName>
        <fullName>Inner membrane protein YbcI</fullName>
    </recommendedName>
</protein>
<name>YBCI_ECOLI</name>
<dbReference type="EMBL" id="U82664">
    <property type="protein sequence ID" value="AAB40280.1"/>
    <property type="molecule type" value="Genomic_DNA"/>
</dbReference>
<dbReference type="EMBL" id="U00096">
    <property type="protein sequence ID" value="AAC73629.1"/>
    <property type="molecule type" value="Genomic_DNA"/>
</dbReference>
<dbReference type="EMBL" id="AP009048">
    <property type="protein sequence ID" value="BAE76304.1"/>
    <property type="molecule type" value="Genomic_DNA"/>
</dbReference>
<dbReference type="EMBL" id="D10588">
    <property type="status" value="NOT_ANNOTATED_CDS"/>
    <property type="molecule type" value="Genomic_DNA"/>
</dbReference>
<dbReference type="EMBL" id="X59293">
    <property type="status" value="NOT_ANNOTATED_CDS"/>
    <property type="molecule type" value="Genomic_DNA"/>
</dbReference>
<dbReference type="PIR" id="F64784">
    <property type="entry name" value="F64784"/>
</dbReference>
<dbReference type="RefSeq" id="NP_415060.1">
    <property type="nucleotide sequence ID" value="NC_000913.3"/>
</dbReference>
<dbReference type="RefSeq" id="WP_001143542.1">
    <property type="nucleotide sequence ID" value="NZ_LN832404.1"/>
</dbReference>
<dbReference type="BioGRID" id="4260967">
    <property type="interactions" value="10"/>
</dbReference>
<dbReference type="FunCoup" id="P45570">
    <property type="interactions" value="58"/>
</dbReference>
<dbReference type="STRING" id="511145.b0527"/>
<dbReference type="PaxDb" id="511145-b0527"/>
<dbReference type="EnsemblBacteria" id="AAC73629">
    <property type="protein sequence ID" value="AAC73629"/>
    <property type="gene ID" value="b0527"/>
</dbReference>
<dbReference type="GeneID" id="945155"/>
<dbReference type="KEGG" id="ecj:JW0516"/>
<dbReference type="KEGG" id="eco:b0527"/>
<dbReference type="KEGG" id="ecoc:C3026_02585"/>
<dbReference type="PATRIC" id="fig|1411691.4.peg.1751"/>
<dbReference type="EchoBASE" id="EB2570"/>
<dbReference type="eggNOG" id="COG1988">
    <property type="taxonomic scope" value="Bacteria"/>
</dbReference>
<dbReference type="HOGENOM" id="CLU_125861_0_0_6"/>
<dbReference type="InParanoid" id="P45570"/>
<dbReference type="OMA" id="FTVWIPL"/>
<dbReference type="OrthoDB" id="9794683at2"/>
<dbReference type="PhylomeDB" id="P45570"/>
<dbReference type="BioCyc" id="EcoCyc:EG12708-MONOMER"/>
<dbReference type="PRO" id="PR:P45570"/>
<dbReference type="Proteomes" id="UP000000625">
    <property type="component" value="Chromosome"/>
</dbReference>
<dbReference type="GO" id="GO:0005886">
    <property type="term" value="C:plasma membrane"/>
    <property type="evidence" value="ECO:0000314"/>
    <property type="project" value="EcoCyc"/>
</dbReference>
<dbReference type="InterPro" id="IPR007404">
    <property type="entry name" value="YdjM-like"/>
</dbReference>
<dbReference type="PANTHER" id="PTHR35531">
    <property type="entry name" value="INNER MEMBRANE PROTEIN YBCI-RELATED"/>
    <property type="match status" value="1"/>
</dbReference>
<dbReference type="PANTHER" id="PTHR35531:SF1">
    <property type="entry name" value="INNER MEMBRANE PROTEIN YBCI-RELATED"/>
    <property type="match status" value="1"/>
</dbReference>
<dbReference type="Pfam" id="PF04307">
    <property type="entry name" value="YdjM"/>
    <property type="match status" value="1"/>
</dbReference>
<organism>
    <name type="scientific">Escherichia coli (strain K12)</name>
    <dbReference type="NCBI Taxonomy" id="83333"/>
    <lineage>
        <taxon>Bacteria</taxon>
        <taxon>Pseudomonadati</taxon>
        <taxon>Pseudomonadota</taxon>
        <taxon>Gammaproteobacteria</taxon>
        <taxon>Enterobacterales</taxon>
        <taxon>Enterobacteriaceae</taxon>
        <taxon>Escherichia</taxon>
    </lineage>
</organism>
<reference key="1">
    <citation type="submission" date="1997-01" db="EMBL/GenBank/DDBJ databases">
        <title>Sequence of minutes 4-25 of Escherichia coli.</title>
        <authorList>
            <person name="Chung E."/>
            <person name="Allen E."/>
            <person name="Araujo R."/>
            <person name="Aparicio A.M."/>
            <person name="Davis K."/>
            <person name="Duncan M."/>
            <person name="Federspiel N."/>
            <person name="Hyman R."/>
            <person name="Kalman S."/>
            <person name="Komp C."/>
            <person name="Kurdi O."/>
            <person name="Lew H."/>
            <person name="Lin D."/>
            <person name="Namath A."/>
            <person name="Oefner P."/>
            <person name="Roberts D."/>
            <person name="Schramm S."/>
            <person name="Davis R.W."/>
        </authorList>
    </citation>
    <scope>NUCLEOTIDE SEQUENCE [LARGE SCALE GENOMIC DNA]</scope>
    <source>
        <strain>K12 / MG1655 / ATCC 47076</strain>
    </source>
</reference>
<reference key="2">
    <citation type="journal article" date="1997" name="Science">
        <title>The complete genome sequence of Escherichia coli K-12.</title>
        <authorList>
            <person name="Blattner F.R."/>
            <person name="Plunkett G. III"/>
            <person name="Bloch C.A."/>
            <person name="Perna N.T."/>
            <person name="Burland V."/>
            <person name="Riley M."/>
            <person name="Collado-Vides J."/>
            <person name="Glasner J.D."/>
            <person name="Rode C.K."/>
            <person name="Mayhew G.F."/>
            <person name="Gregor J."/>
            <person name="Davis N.W."/>
            <person name="Kirkpatrick H.A."/>
            <person name="Goeden M.A."/>
            <person name="Rose D.J."/>
            <person name="Mau B."/>
            <person name="Shao Y."/>
        </authorList>
    </citation>
    <scope>NUCLEOTIDE SEQUENCE [LARGE SCALE GENOMIC DNA]</scope>
    <source>
        <strain>K12 / MG1655 / ATCC 47076</strain>
    </source>
</reference>
<reference key="3">
    <citation type="journal article" date="2006" name="Mol. Syst. Biol.">
        <title>Highly accurate genome sequences of Escherichia coli K-12 strains MG1655 and W3110.</title>
        <authorList>
            <person name="Hayashi K."/>
            <person name="Morooka N."/>
            <person name="Yamamoto Y."/>
            <person name="Fujita K."/>
            <person name="Isono K."/>
            <person name="Choi S."/>
            <person name="Ohtsubo E."/>
            <person name="Baba T."/>
            <person name="Wanner B.L."/>
            <person name="Mori H."/>
            <person name="Horiuchi T."/>
        </authorList>
    </citation>
    <scope>NUCLEOTIDE SEQUENCE [LARGE SCALE GENOMIC DNA]</scope>
    <source>
        <strain>K12 / W3110 / ATCC 27325 / DSM 5911</strain>
    </source>
</reference>
<reference key="4">
    <citation type="submission" date="1992-07" db="EMBL/GenBank/DDBJ databases">
        <authorList>
            <person name="Yonetani Y."/>
            <person name="Sanpei G."/>
            <person name="Mizobuchi K."/>
        </authorList>
    </citation>
    <scope>NUCLEOTIDE SEQUENCE [GENOMIC DNA] OF 1-144</scope>
    <source>
        <strain>K12 / W3110 / ATCC 27325 / DSM 5911</strain>
    </source>
</reference>
<reference key="5">
    <citation type="submission" date="1991-04" db="EMBL/GenBank/DDBJ databases">
        <authorList>
            <person name="Corrochano L.M."/>
        </authorList>
    </citation>
    <scope>NUCLEOTIDE SEQUENCE [GENOMIC DNA] OF 50-173</scope>
    <source>
        <strain>K12</strain>
    </source>
</reference>
<reference key="6">
    <citation type="journal article" date="1995" name="Nucleic Acids Res.">
        <title>Detection of new genes in a bacterial genome using Markov models for three gene classes.</title>
        <authorList>
            <person name="Borodovsky M."/>
            <person name="McIninch J."/>
            <person name="Koonin E.V."/>
            <person name="Rudd K.E."/>
            <person name="Medigue C."/>
            <person name="Danchin A."/>
        </authorList>
    </citation>
    <scope>IDENTIFICATION</scope>
</reference>
<reference key="7">
    <citation type="journal article" date="2005" name="Science">
        <title>Global topology analysis of the Escherichia coli inner membrane proteome.</title>
        <authorList>
            <person name="Daley D.O."/>
            <person name="Rapp M."/>
            <person name="Granseth E."/>
            <person name="Melen K."/>
            <person name="Drew D."/>
            <person name="von Heijne G."/>
        </authorList>
    </citation>
    <scope>TOPOLOGY [LARGE SCALE ANALYSIS]</scope>
    <source>
        <strain>K12 / MG1655 / ATCC 47076</strain>
    </source>
</reference>
<comment type="subcellular location">
    <subcellularLocation>
        <location>Cell inner membrane</location>
        <topology>Multi-pass membrane protein</topology>
    </subcellularLocation>
</comment>
<keyword id="KW-0997">Cell inner membrane</keyword>
<keyword id="KW-1003">Cell membrane</keyword>
<keyword id="KW-0472">Membrane</keyword>
<keyword id="KW-1185">Reference proteome</keyword>
<keyword id="KW-0812">Transmembrane</keyword>
<keyword id="KW-1133">Transmembrane helix</keyword>